<protein>
    <recommendedName>
        <fullName evidence="1">Ribitol-5-phosphate cytidylyltransferase 2</fullName>
        <ecNumber evidence="1">2.7.7.40</ecNumber>
    </recommendedName>
</protein>
<name>TARI2_STAAW</name>
<keyword id="KW-0961">Cell wall biogenesis/degradation</keyword>
<keyword id="KW-0548">Nucleotidyltransferase</keyword>
<keyword id="KW-0777">Teichoic acid biosynthesis</keyword>
<keyword id="KW-0808">Transferase</keyword>
<comment type="function">
    <text evidence="1">Catalyzes the transfer of the cytidylyl group of CTP to D-ribitol 5-phosphate.</text>
</comment>
<comment type="catalytic activity">
    <reaction evidence="1">
        <text>D-ribitol 5-phosphate + CTP + H(+) = CDP-L-ribitol + diphosphate</text>
        <dbReference type="Rhea" id="RHEA:12456"/>
        <dbReference type="ChEBI" id="CHEBI:15378"/>
        <dbReference type="ChEBI" id="CHEBI:33019"/>
        <dbReference type="ChEBI" id="CHEBI:37563"/>
        <dbReference type="ChEBI" id="CHEBI:57608"/>
        <dbReference type="ChEBI" id="CHEBI:57695"/>
        <dbReference type="EC" id="2.7.7.40"/>
    </reaction>
</comment>
<comment type="pathway">
    <text evidence="1">Cell wall biogenesis; poly(ribitol phosphate) teichoic acid biosynthesis.</text>
</comment>
<comment type="similarity">
    <text evidence="1">Belongs to the IspD/TarI cytidylyltransferase family. TarI subfamily.</text>
</comment>
<dbReference type="EC" id="2.7.7.40" evidence="1"/>
<dbReference type="EMBL" id="BA000033">
    <property type="protein sequence ID" value="BAB94092.1"/>
    <property type="molecule type" value="Genomic_DNA"/>
</dbReference>
<dbReference type="RefSeq" id="WP_000638479.1">
    <property type="nucleotide sequence ID" value="NC_003923.1"/>
</dbReference>
<dbReference type="SMR" id="Q8NYI0"/>
<dbReference type="KEGG" id="sam:MW0227"/>
<dbReference type="HOGENOM" id="CLU_061281_2_3_9"/>
<dbReference type="UniPathway" id="UPA00790"/>
<dbReference type="GO" id="GO:0050518">
    <property type="term" value="F:2-C-methyl-D-erythritol 4-phosphate cytidylyltransferase activity"/>
    <property type="evidence" value="ECO:0007669"/>
    <property type="project" value="TreeGrafter"/>
</dbReference>
<dbReference type="GO" id="GO:0047349">
    <property type="term" value="F:D-ribitol-5-phosphate cytidylyltransferase activity"/>
    <property type="evidence" value="ECO:0007669"/>
    <property type="project" value="UniProtKB-UniRule"/>
</dbReference>
<dbReference type="GO" id="GO:0071555">
    <property type="term" value="P:cell wall organization"/>
    <property type="evidence" value="ECO:0007669"/>
    <property type="project" value="UniProtKB-KW"/>
</dbReference>
<dbReference type="GO" id="GO:0008299">
    <property type="term" value="P:isoprenoid biosynthetic process"/>
    <property type="evidence" value="ECO:0007669"/>
    <property type="project" value="InterPro"/>
</dbReference>
<dbReference type="GO" id="GO:1902012">
    <property type="term" value="P:poly(ribitol phosphate) teichoic acid biosynthetic process"/>
    <property type="evidence" value="ECO:0007669"/>
    <property type="project" value="UniProtKB-UniRule"/>
</dbReference>
<dbReference type="CDD" id="cd02516">
    <property type="entry name" value="CDP-ME_synthetase"/>
    <property type="match status" value="1"/>
</dbReference>
<dbReference type="FunFam" id="3.90.550.10:FF:000003">
    <property type="entry name" value="2-C-methyl-D-erythritol 4-phosphate cytidylyltransferase"/>
    <property type="match status" value="1"/>
</dbReference>
<dbReference type="Gene3D" id="3.90.550.10">
    <property type="entry name" value="Spore Coat Polysaccharide Biosynthesis Protein SpsA, Chain A"/>
    <property type="match status" value="1"/>
</dbReference>
<dbReference type="HAMAP" id="MF_02068">
    <property type="entry name" value="TarI"/>
    <property type="match status" value="1"/>
</dbReference>
<dbReference type="InterPro" id="IPR034683">
    <property type="entry name" value="IspD/TarI"/>
</dbReference>
<dbReference type="InterPro" id="IPR050088">
    <property type="entry name" value="IspD/TarI_cytidylyltransf_bact"/>
</dbReference>
<dbReference type="InterPro" id="IPR018294">
    <property type="entry name" value="ISPD_synthase_CS"/>
</dbReference>
<dbReference type="InterPro" id="IPR029044">
    <property type="entry name" value="Nucleotide-diphossugar_trans"/>
</dbReference>
<dbReference type="InterPro" id="IPR034709">
    <property type="entry name" value="TarI"/>
</dbReference>
<dbReference type="NCBIfam" id="NF001183">
    <property type="entry name" value="PRK00155.1-3"/>
    <property type="match status" value="1"/>
</dbReference>
<dbReference type="NCBIfam" id="NF009924">
    <property type="entry name" value="PRK13385.1"/>
    <property type="match status" value="1"/>
</dbReference>
<dbReference type="PANTHER" id="PTHR32125">
    <property type="entry name" value="2-C-METHYL-D-ERYTHRITOL 4-PHOSPHATE CYTIDYLYLTRANSFERASE, CHLOROPLASTIC"/>
    <property type="match status" value="1"/>
</dbReference>
<dbReference type="PANTHER" id="PTHR32125:SF8">
    <property type="entry name" value="RIBITOL-5-PHOSPHATE CYTIDYLYLTRANSFERASE"/>
    <property type="match status" value="1"/>
</dbReference>
<dbReference type="Pfam" id="PF01128">
    <property type="entry name" value="IspD"/>
    <property type="match status" value="1"/>
</dbReference>
<dbReference type="SUPFAM" id="SSF53448">
    <property type="entry name" value="Nucleotide-diphospho-sugar transferases"/>
    <property type="match status" value="1"/>
</dbReference>
<dbReference type="PROSITE" id="PS01295">
    <property type="entry name" value="ISPD"/>
    <property type="match status" value="1"/>
</dbReference>
<proteinExistence type="inferred from homology"/>
<evidence type="ECO:0000255" key="1">
    <source>
        <dbReference type="HAMAP-Rule" id="MF_02068"/>
    </source>
</evidence>
<reference key="1">
    <citation type="journal article" date="2002" name="Lancet">
        <title>Genome and virulence determinants of high virulence community-acquired MRSA.</title>
        <authorList>
            <person name="Baba T."/>
            <person name="Takeuchi F."/>
            <person name="Kuroda M."/>
            <person name="Yuzawa H."/>
            <person name="Aoki K."/>
            <person name="Oguchi A."/>
            <person name="Nagai Y."/>
            <person name="Iwama N."/>
            <person name="Asano K."/>
            <person name="Naimi T."/>
            <person name="Kuroda H."/>
            <person name="Cui L."/>
            <person name="Yamamoto K."/>
            <person name="Hiramatsu K."/>
        </authorList>
    </citation>
    <scope>NUCLEOTIDE SEQUENCE [LARGE SCALE GENOMIC DNA]</scope>
    <source>
        <strain>MW2</strain>
    </source>
</reference>
<organism>
    <name type="scientific">Staphylococcus aureus (strain MW2)</name>
    <dbReference type="NCBI Taxonomy" id="196620"/>
    <lineage>
        <taxon>Bacteria</taxon>
        <taxon>Bacillati</taxon>
        <taxon>Bacillota</taxon>
        <taxon>Bacilli</taxon>
        <taxon>Bacillales</taxon>
        <taxon>Staphylococcaceae</taxon>
        <taxon>Staphylococcus</taxon>
    </lineage>
</organism>
<sequence>MIYAGILAGGIGSRMGNVPLPKQFLDIDNKPILIHTIEKFILVSEFNEIIIATPAQWISHTQDILKKYNITDQRVKVVAGGTDRNETIMNIIDYIRNVNGINNDDVIVTHDAVRPFLTQRIIKENIEVAEKYGAVDTVIEAIDTIVMSKDKQNIHSIPVRNEMYQGQTPQSFNIKLLQDSYRALSSAQKEILSDACKIIVESGHPVKLVRGELYNIKVTTPYDLKVANAIIQGDIADD</sequence>
<gene>
    <name evidence="1" type="primary">tarI2</name>
    <name type="ordered locus">MW0227</name>
</gene>
<feature type="chain" id="PRO_0000075623" description="Ribitol-5-phosphate cytidylyltransferase 2">
    <location>
        <begin position="1"/>
        <end position="238"/>
    </location>
</feature>
<feature type="binding site" evidence="1">
    <location>
        <begin position="7"/>
        <end position="10"/>
    </location>
    <ligand>
        <name>CTP</name>
        <dbReference type="ChEBI" id="CHEBI:37563"/>
    </ligand>
</feature>
<feature type="binding site" evidence="1">
    <location>
        <begin position="81"/>
        <end position="87"/>
    </location>
    <ligand>
        <name>CTP</name>
        <dbReference type="ChEBI" id="CHEBI:37563"/>
    </ligand>
</feature>
<feature type="site" description="Transition state stabilizer" evidence="1">
    <location>
        <position position="14"/>
    </location>
</feature>
<feature type="site" description="Transition state stabilizer" evidence="1">
    <location>
        <position position="22"/>
    </location>
</feature>
<feature type="site" description="Positions ribitol 5-phosphate for the nucleophilic attack" evidence="1">
    <location>
        <position position="160"/>
    </location>
</feature>
<feature type="site" description="Positions ribitol 5-phosphate for the nucleophilic attack" evidence="1">
    <location>
        <position position="217"/>
    </location>
</feature>
<accession>Q8NYI0</accession>